<dbReference type="EMBL" id="Z69382">
    <property type="protein sequence ID" value="CAA93381.1"/>
    <property type="molecule type" value="Genomic_DNA"/>
</dbReference>
<dbReference type="EMBL" id="Z71400">
    <property type="protein sequence ID" value="CAA96005.1"/>
    <property type="molecule type" value="Genomic_DNA"/>
</dbReference>
<dbReference type="EMBL" id="EF125216">
    <property type="protein sequence ID" value="ABN58535.1"/>
    <property type="molecule type" value="Genomic_DNA"/>
</dbReference>
<dbReference type="EMBL" id="EF125217">
    <property type="protein sequence ID" value="ABN58543.1"/>
    <property type="molecule type" value="Genomic_DNA"/>
</dbReference>
<dbReference type="EMBL" id="EF125218">
    <property type="protein sequence ID" value="ABN58552.1"/>
    <property type="molecule type" value="Genomic_DNA"/>
</dbReference>
<dbReference type="EMBL" id="EF125219">
    <property type="protein sequence ID" value="ABN58561.1"/>
    <property type="molecule type" value="Genomic_DNA"/>
</dbReference>
<dbReference type="EMBL" id="EF125220">
    <property type="protein sequence ID" value="ABN58570.1"/>
    <property type="molecule type" value="Genomic_DNA"/>
</dbReference>
<dbReference type="EMBL" id="EF125221">
    <property type="protein sequence ID" value="ABN58579.1"/>
    <property type="molecule type" value="Genomic_DNA"/>
</dbReference>
<dbReference type="EMBL" id="EF125222">
    <property type="protein sequence ID" value="ABN58588.1"/>
    <property type="molecule type" value="Genomic_DNA"/>
</dbReference>
<dbReference type="EMBL" id="EF125223">
    <property type="protein sequence ID" value="ABN58597.1"/>
    <property type="molecule type" value="Genomic_DNA"/>
</dbReference>
<dbReference type="EMBL" id="EF125224">
    <property type="protein sequence ID" value="ABN58606.1"/>
    <property type="molecule type" value="Genomic_DNA"/>
</dbReference>
<dbReference type="EMBL" id="EF125225">
    <property type="protein sequence ID" value="ABN58615.1"/>
    <property type="molecule type" value="Genomic_DNA"/>
</dbReference>
<dbReference type="EMBL" id="EF125226">
    <property type="protein sequence ID" value="ABN58624.1"/>
    <property type="molecule type" value="Genomic_DNA"/>
</dbReference>
<dbReference type="EMBL" id="EF125228">
    <property type="protein sequence ID" value="ABN58642.1"/>
    <property type="molecule type" value="Genomic_DNA"/>
</dbReference>
<dbReference type="EMBL" id="BK006947">
    <property type="protein sequence ID" value="DAA10425.1"/>
    <property type="molecule type" value="Genomic_DNA"/>
</dbReference>
<dbReference type="PIR" id="S63065">
    <property type="entry name" value="S63065"/>
</dbReference>
<dbReference type="RefSeq" id="NP_014275.3">
    <property type="nucleotide sequence ID" value="NM_001182962.3"/>
</dbReference>
<dbReference type="PDB" id="2V3M">
    <property type="method" value="X-ray"/>
    <property type="resolution" value="2.74 A"/>
    <property type="chains" value="A/B/C/D/E/F=109-232"/>
</dbReference>
<dbReference type="PDBsum" id="2V3M"/>
<dbReference type="SMR" id="P53919"/>
<dbReference type="BioGRID" id="35703">
    <property type="interactions" value="217"/>
</dbReference>
<dbReference type="DIP" id="DIP-4345N"/>
<dbReference type="FunCoup" id="P53919">
    <property type="interactions" value="501"/>
</dbReference>
<dbReference type="IntAct" id="P53919">
    <property type="interactions" value="258"/>
</dbReference>
<dbReference type="MINT" id="P53919"/>
<dbReference type="STRING" id="4932.YNL124W"/>
<dbReference type="iPTMnet" id="P53919"/>
<dbReference type="PaxDb" id="4932-YNL124W"/>
<dbReference type="PeptideAtlas" id="P53919"/>
<dbReference type="EnsemblFungi" id="YNL124W_mRNA">
    <property type="protein sequence ID" value="YNL124W"/>
    <property type="gene ID" value="YNL124W"/>
</dbReference>
<dbReference type="GeneID" id="855599"/>
<dbReference type="KEGG" id="sce:YNL124W"/>
<dbReference type="AGR" id="SGD:S000005068"/>
<dbReference type="SGD" id="S000005068">
    <property type="gene designation" value="NAF1"/>
</dbReference>
<dbReference type="VEuPathDB" id="FungiDB:YNL124W"/>
<dbReference type="eggNOG" id="KOG2236">
    <property type="taxonomic scope" value="Eukaryota"/>
</dbReference>
<dbReference type="GeneTree" id="ENSGT01040000244168"/>
<dbReference type="HOGENOM" id="CLU_025072_1_0_1"/>
<dbReference type="InParanoid" id="P53919"/>
<dbReference type="OMA" id="WKNDDEP"/>
<dbReference type="OrthoDB" id="21550at2759"/>
<dbReference type="BioCyc" id="YEAST:G3O-33145-MONOMER"/>
<dbReference type="BioGRID-ORCS" id="855599">
    <property type="hits" value="6 hits in 10 CRISPR screens"/>
</dbReference>
<dbReference type="EvolutionaryTrace" id="P53919"/>
<dbReference type="PRO" id="PR:P53919"/>
<dbReference type="Proteomes" id="UP000002311">
    <property type="component" value="Chromosome XIV"/>
</dbReference>
<dbReference type="RNAct" id="P53919">
    <property type="molecule type" value="protein"/>
</dbReference>
<dbReference type="GO" id="GO:0005654">
    <property type="term" value="C:nucleoplasm"/>
    <property type="evidence" value="ECO:0000314"/>
    <property type="project" value="SGD"/>
</dbReference>
<dbReference type="GO" id="GO:0005634">
    <property type="term" value="C:nucleus"/>
    <property type="evidence" value="ECO:0000314"/>
    <property type="project" value="SGD"/>
</dbReference>
<dbReference type="GO" id="GO:0005732">
    <property type="term" value="C:sno(s)RNA-containing ribonucleoprotein complex"/>
    <property type="evidence" value="ECO:0000318"/>
    <property type="project" value="GO_Central"/>
</dbReference>
<dbReference type="GO" id="GO:0003723">
    <property type="term" value="F:RNA binding"/>
    <property type="evidence" value="ECO:0000353"/>
    <property type="project" value="SGD"/>
</dbReference>
<dbReference type="GO" id="GO:0000493">
    <property type="term" value="P:box H/ACA snoRNP assembly"/>
    <property type="evidence" value="ECO:0000315"/>
    <property type="project" value="SGD"/>
</dbReference>
<dbReference type="GO" id="GO:0001522">
    <property type="term" value="P:pseudouridine synthesis"/>
    <property type="evidence" value="ECO:0007669"/>
    <property type="project" value="InterPro"/>
</dbReference>
<dbReference type="GO" id="GO:0042254">
    <property type="term" value="P:ribosome biogenesis"/>
    <property type="evidence" value="ECO:0000318"/>
    <property type="project" value="GO_Central"/>
</dbReference>
<dbReference type="GO" id="GO:0006364">
    <property type="term" value="P:rRNA processing"/>
    <property type="evidence" value="ECO:0007669"/>
    <property type="project" value="UniProtKB-KW"/>
</dbReference>
<dbReference type="FunFam" id="2.40.10.230:FF:000002">
    <property type="entry name" value="H/ACA ribonucleoprotein complex non-core subunit NAF1"/>
    <property type="match status" value="1"/>
</dbReference>
<dbReference type="Gene3D" id="2.40.10.230">
    <property type="entry name" value="Probable tRNA pseudouridine synthase domain"/>
    <property type="match status" value="1"/>
</dbReference>
<dbReference type="InterPro" id="IPR038664">
    <property type="entry name" value="Gar1/Naf1_Cbf5-bd_sf"/>
</dbReference>
<dbReference type="InterPro" id="IPR007504">
    <property type="entry name" value="H/ACA_rnp_Gar1/Naf1"/>
</dbReference>
<dbReference type="InterPro" id="IPR040309">
    <property type="entry name" value="Naf1"/>
</dbReference>
<dbReference type="InterPro" id="IPR009000">
    <property type="entry name" value="Transl_B-barrel_sf"/>
</dbReference>
<dbReference type="PANTHER" id="PTHR31633">
    <property type="entry name" value="H/ACA RIBONUCLEOPROTEIN COMPLEX NON-CORE SUBUNIT NAF1"/>
    <property type="match status" value="1"/>
</dbReference>
<dbReference type="PANTHER" id="PTHR31633:SF1">
    <property type="entry name" value="H_ACA RIBONUCLEOPROTEIN COMPLEX NON-CORE SUBUNIT NAF1"/>
    <property type="match status" value="1"/>
</dbReference>
<dbReference type="Pfam" id="PF04410">
    <property type="entry name" value="Gar1"/>
    <property type="match status" value="1"/>
</dbReference>
<dbReference type="SUPFAM" id="SSF50447">
    <property type="entry name" value="Translation proteins"/>
    <property type="match status" value="1"/>
</dbReference>
<evidence type="ECO:0000256" key="1">
    <source>
        <dbReference type="SAM" id="MobiDB-lite"/>
    </source>
</evidence>
<evidence type="ECO:0000269" key="2">
    <source>
    </source>
</evidence>
<evidence type="ECO:0000269" key="3">
    <source>
    </source>
</evidence>
<evidence type="ECO:0000269" key="4">
    <source>
    </source>
</evidence>
<evidence type="ECO:0000269" key="5">
    <source>
    </source>
</evidence>
<evidence type="ECO:0000269" key="6">
    <source>
    </source>
</evidence>
<evidence type="ECO:0000269" key="7">
    <source>
    </source>
</evidence>
<evidence type="ECO:0000269" key="8">
    <source>
    </source>
</evidence>
<evidence type="ECO:0000269" key="9">
    <source>
    </source>
</evidence>
<evidence type="ECO:0000269" key="10">
    <source>
    </source>
</evidence>
<evidence type="ECO:0000305" key="11"/>
<evidence type="ECO:0007744" key="12">
    <source>
    </source>
</evidence>
<evidence type="ECO:0007744" key="13">
    <source>
    </source>
</evidence>
<evidence type="ECO:0007744" key="14">
    <source>
    </source>
</evidence>
<evidence type="ECO:0007829" key="15">
    <source>
        <dbReference type="PDB" id="2V3M"/>
    </source>
</evidence>
<sequence length="492" mass="54949">MSDDLFSKALENPDQDLNVELPKDDVDLGLLGDGGNERKTDEPVADAERSTGLGSGSSESESDSGSDSDSDSGSSGSEDDSADQDVEGEDEGGDAIENEDEDEDPSPSGPILSKNEILEETVPELPEDYEISEKTIITPIGVLKSAFENNIIIHATMSGEKRVLKEGSIFCLEDRTLIGMLTEVFGPLQNPFYRIKLPDSKKNLFDELKVRLGEKAFIVTPDAHWIDTFELKRNKGTDASNGYDEELPEEEQEFSDDEKEALFKKMKKQQRQRKKRDNRKLANDSDNVKVKRARQPKANSLPKLVPPLGMSSNAPMQHGYKSRNARENIKRESSATSNRNGSSPVPITQHHQQQFSANNYPFPQQPNGMPYPPYSPFPQPTNFQYPPPPFGQATPAQFSNTVPYGSLPPAYNNMSPPTQQSFMPMTQSQPPLPYGVPPMNQMQNPMYIQPPPQAPPQGNGNFQQVMELHQILLQQQQQQHQYQHQHQQDPRT</sequence>
<protein>
    <recommendedName>
        <fullName>H/ACA ribonucleoprotein complex non-core subunit NAF1</fullName>
    </recommendedName>
    <alternativeName>
        <fullName>Nuclear assembly factor 1</fullName>
    </alternativeName>
</protein>
<name>NAF1_YEAST</name>
<gene>
    <name type="primary">NAF1</name>
    <name type="ordered locus">YNL124W</name>
    <name type="ORF">N1888</name>
</gene>
<feature type="chain" id="PRO_0000203428" description="H/ACA ribonucleoprotein complex non-core subunit NAF1">
    <location>
        <begin position="1"/>
        <end position="492"/>
    </location>
</feature>
<feature type="region of interest" description="Disordered" evidence="1">
    <location>
        <begin position="1"/>
        <end position="117"/>
    </location>
</feature>
<feature type="region of interest" description="RNA-binding">
    <location>
        <begin position="172"/>
        <end position="230"/>
    </location>
</feature>
<feature type="region of interest" description="Disordered" evidence="1">
    <location>
        <begin position="237"/>
        <end position="351"/>
    </location>
</feature>
<feature type="region of interest" description="Disordered" evidence="1">
    <location>
        <begin position="472"/>
        <end position="492"/>
    </location>
</feature>
<feature type="compositionally biased region" description="Basic and acidic residues" evidence="1">
    <location>
        <begin position="35"/>
        <end position="49"/>
    </location>
</feature>
<feature type="compositionally biased region" description="Acidic residues" evidence="1">
    <location>
        <begin position="60"/>
        <end position="70"/>
    </location>
</feature>
<feature type="compositionally biased region" description="Acidic residues" evidence="1">
    <location>
        <begin position="77"/>
        <end position="105"/>
    </location>
</feature>
<feature type="compositionally biased region" description="Acidic residues" evidence="1">
    <location>
        <begin position="243"/>
        <end position="259"/>
    </location>
</feature>
<feature type="compositionally biased region" description="Basic residues" evidence="1">
    <location>
        <begin position="264"/>
        <end position="278"/>
    </location>
</feature>
<feature type="compositionally biased region" description="Basic and acidic residues" evidence="1">
    <location>
        <begin position="279"/>
        <end position="289"/>
    </location>
</feature>
<feature type="compositionally biased region" description="Basic and acidic residues" evidence="1">
    <location>
        <begin position="324"/>
        <end position="333"/>
    </location>
</feature>
<feature type="compositionally biased region" description="Polar residues" evidence="1">
    <location>
        <begin position="334"/>
        <end position="351"/>
    </location>
</feature>
<feature type="compositionally biased region" description="Low complexity" evidence="1">
    <location>
        <begin position="472"/>
        <end position="485"/>
    </location>
</feature>
<feature type="modified residue" description="Phosphoserine" evidence="12 13 14">
    <location>
        <position position="255"/>
    </location>
</feature>
<feature type="sequence variant" description="In strain: YJM269, YJM270, YJM326 and YJM1129." evidence="10">
    <original>P</original>
    <variation>A</variation>
    <location>
        <position position="378"/>
    </location>
</feature>
<feature type="sequence variant" description="In strain: YJM627." evidence="10">
    <original>M</original>
    <variation>I</variation>
    <location>
        <position position="423"/>
    </location>
</feature>
<feature type="sequence variant" description="In strain: YJM269, YJM270, YJM326 and YJM1129." evidence="10">
    <original>P</original>
    <variation>S</variation>
    <location>
        <position position="424"/>
    </location>
</feature>
<feature type="sequence variant" description="In strain: SK1, V1-09, YJM269, YJM270, YJM280, YJM320, YJM326, YJM339, YJM627, YJM789 and YJM1129." evidence="10">
    <original>T</original>
    <variation>A</variation>
    <location>
        <position position="426"/>
    </location>
</feature>
<feature type="sequence variant" description="In strain: V1-09 and YJM627." evidence="10">
    <original>H</original>
    <variation>N</variation>
    <location>
        <position position="480"/>
    </location>
</feature>
<feature type="strand" evidence="15">
    <location>
        <begin position="137"/>
        <end position="147"/>
    </location>
</feature>
<feature type="strand" evidence="15">
    <location>
        <begin position="150"/>
        <end position="155"/>
    </location>
</feature>
<feature type="strand" evidence="15">
    <location>
        <begin position="169"/>
        <end position="172"/>
    </location>
</feature>
<feature type="strand" evidence="15">
    <location>
        <begin position="177"/>
        <end position="180"/>
    </location>
</feature>
<feature type="strand" evidence="15">
    <location>
        <begin position="183"/>
        <end position="186"/>
    </location>
</feature>
<feature type="strand" evidence="15">
    <location>
        <begin position="188"/>
        <end position="190"/>
    </location>
</feature>
<feature type="strand" evidence="15">
    <location>
        <begin position="192"/>
        <end position="196"/>
    </location>
</feature>
<feature type="helix" evidence="15">
    <location>
        <begin position="199"/>
        <end position="201"/>
    </location>
</feature>
<feature type="helix" evidence="15">
    <location>
        <begin position="202"/>
        <end position="209"/>
    </location>
</feature>
<feature type="turn" evidence="15">
    <location>
        <begin position="210"/>
        <end position="213"/>
    </location>
</feature>
<feature type="strand" evidence="15">
    <location>
        <begin position="214"/>
        <end position="219"/>
    </location>
</feature>
<comment type="function">
    <text evidence="2 3 4 7 8">RNA-binding protein required for the maturation of box H/ACA snoRNPs complex and ribosome biogenesis. During assembly of the H/ACA snoRNPs complex, it associates with the complex and disappears during maturation of the complex and is replaced by GAR1 to yield mature H/ACA snoRNPs complex. Acts as a competitive binder for CBF5 probably required to prevent non-cognate RNAs from being loaded during transport of the particle by inducing a non-productive conformation of CBF5.</text>
</comment>
<comment type="subunit">
    <text evidence="2 4 7 8">During assembly of the complex, component of the small nucleolar ribonucleoprotein particles containing H/ACA-type snoRNAs (H/ACA snoRNPs) which contains CBF5, NAF1, NHP2 and NOP10 proteins. Interacts with SHQ1. Interacts directly with CBF5. Interacts with hyperphosphorylated C-terminal domain (CTD) of RNA polymerase II large subunit (RPB1).</text>
</comment>
<comment type="interaction">
    <interactant intactId="EBI-28887">
        <id>P53919</id>
    </interactant>
    <interactant intactId="EBI-4105">
        <id>P33322</id>
        <label>CBF5</label>
    </interactant>
    <organismsDiffer>false</organismsDiffer>
    <experiments>7</experiments>
</comment>
<comment type="interaction">
    <interactant intactId="EBI-28887">
        <id>P53919</id>
    </interactant>
    <interactant intactId="EBI-412442">
        <id>P25588</id>
        <label>MRC1</label>
    </interactant>
    <organismsDiffer>false</organismsDiffer>
    <experiments>2</experiments>
</comment>
<comment type="interaction">
    <interactant intactId="EBI-28887">
        <id>P53919</id>
    </interactant>
    <interactant intactId="EBI-12014">
        <id>P32495</id>
        <label>NHP2</label>
    </interactant>
    <organismsDiffer>false</organismsDiffer>
    <experiments>4</experiments>
</comment>
<comment type="subcellular location">
    <subcellularLocation>
        <location evidence="2 3 4 5">Nucleus</location>
    </subcellularLocation>
    <text evidence="2">Mostly present in the nucleoplasm. Absent from the nucleolus.</text>
</comment>
<comment type="domain">
    <text evidence="9">The central region (136-221) reveals a striking structural homology with the core domain of GAR1.</text>
</comment>
<comment type="miscellaneous">
    <text evidence="6">Present with 1810 molecules/cell in log phase SD medium.</text>
</comment>
<comment type="similarity">
    <text evidence="11">Belongs to the NAF1 family.</text>
</comment>
<organism>
    <name type="scientific">Saccharomyces cerevisiae (strain ATCC 204508 / S288c)</name>
    <name type="common">Baker's yeast</name>
    <dbReference type="NCBI Taxonomy" id="559292"/>
    <lineage>
        <taxon>Eukaryota</taxon>
        <taxon>Fungi</taxon>
        <taxon>Dikarya</taxon>
        <taxon>Ascomycota</taxon>
        <taxon>Saccharomycotina</taxon>
        <taxon>Saccharomycetes</taxon>
        <taxon>Saccharomycetales</taxon>
        <taxon>Saccharomycetaceae</taxon>
        <taxon>Saccharomyces</taxon>
    </lineage>
</organism>
<proteinExistence type="evidence at protein level"/>
<reference key="1">
    <citation type="journal article" date="1997" name="Yeast">
        <title>The DNA sequence of cosmid 14-13b from chromosome XIV of Saccharomyces cerevisiae reveals an unusually high number of overlapping open reading frames.</title>
        <authorList>
            <person name="de Antoni A."/>
            <person name="D'Angelo M."/>
            <person name="Dal Pero F."/>
            <person name="Sartorello F."/>
            <person name="Pandolfo D."/>
            <person name="Pallavicini A."/>
            <person name="Lanfranchi G."/>
            <person name="Valle G."/>
        </authorList>
    </citation>
    <scope>NUCLEOTIDE SEQUENCE [GENOMIC DNA]</scope>
</reference>
<reference key="2">
    <citation type="journal article" date="1997" name="Nature">
        <title>The nucleotide sequence of Saccharomyces cerevisiae chromosome XIV and its evolutionary implications.</title>
        <authorList>
            <person name="Philippsen P."/>
            <person name="Kleine K."/>
            <person name="Poehlmann R."/>
            <person name="Duesterhoeft A."/>
            <person name="Hamberg K."/>
            <person name="Hegemann J.H."/>
            <person name="Obermaier B."/>
            <person name="Urrestarazu L.A."/>
            <person name="Aert R."/>
            <person name="Albermann K."/>
            <person name="Altmann R."/>
            <person name="Andre B."/>
            <person name="Baladron V."/>
            <person name="Ballesta J.P.G."/>
            <person name="Becam A.-M."/>
            <person name="Beinhauer J.D."/>
            <person name="Boskovic J."/>
            <person name="Buitrago M.J."/>
            <person name="Bussereau F."/>
            <person name="Coster F."/>
            <person name="Crouzet M."/>
            <person name="D'Angelo M."/>
            <person name="Dal Pero F."/>
            <person name="De Antoni A."/>
            <person name="del Rey F."/>
            <person name="Doignon F."/>
            <person name="Domdey H."/>
            <person name="Dubois E."/>
            <person name="Fiedler T.A."/>
            <person name="Fleig U."/>
            <person name="Floeth M."/>
            <person name="Fritz C."/>
            <person name="Gaillardin C."/>
            <person name="Garcia-Cantalejo J.M."/>
            <person name="Glansdorff N."/>
            <person name="Goffeau A."/>
            <person name="Gueldener U."/>
            <person name="Herbert C.J."/>
            <person name="Heumann K."/>
            <person name="Heuss-Neitzel D."/>
            <person name="Hilbert H."/>
            <person name="Hinni K."/>
            <person name="Iraqui Houssaini I."/>
            <person name="Jacquet M."/>
            <person name="Jimenez A."/>
            <person name="Jonniaux J.-L."/>
            <person name="Karpfinger-Hartl L."/>
            <person name="Lanfranchi G."/>
            <person name="Lepingle A."/>
            <person name="Levesque H."/>
            <person name="Lyck R."/>
            <person name="Maftahi M."/>
            <person name="Mallet L."/>
            <person name="Maurer C.T.C."/>
            <person name="Messenguy F."/>
            <person name="Mewes H.-W."/>
            <person name="Moestl D."/>
            <person name="Nasr F."/>
            <person name="Nicaud J.-M."/>
            <person name="Niedenthal R.K."/>
            <person name="Pandolfo D."/>
            <person name="Pierard A."/>
            <person name="Piravandi E."/>
            <person name="Planta R.J."/>
            <person name="Pohl T.M."/>
            <person name="Purnelle B."/>
            <person name="Rebischung C."/>
            <person name="Remacha M.A."/>
            <person name="Revuelta J.L."/>
            <person name="Rinke M."/>
            <person name="Saiz J.E."/>
            <person name="Sartorello F."/>
            <person name="Scherens B."/>
            <person name="Sen-Gupta M."/>
            <person name="Soler-Mira A."/>
            <person name="Urbanus J.H.M."/>
            <person name="Valle G."/>
            <person name="Van Dyck L."/>
            <person name="Verhasselt P."/>
            <person name="Vierendeels F."/>
            <person name="Vissers S."/>
            <person name="Voet M."/>
            <person name="Volckaert G."/>
            <person name="Wach A."/>
            <person name="Wambutt R."/>
            <person name="Wedler H."/>
            <person name="Zollner A."/>
            <person name="Hani J."/>
        </authorList>
    </citation>
    <scope>NUCLEOTIDE SEQUENCE [LARGE SCALE GENOMIC DNA]</scope>
    <source>
        <strain>ATCC 204508 / S288c</strain>
    </source>
</reference>
<reference key="3">
    <citation type="journal article" date="2014" name="G3 (Bethesda)">
        <title>The reference genome sequence of Saccharomyces cerevisiae: Then and now.</title>
        <authorList>
            <person name="Engel S.R."/>
            <person name="Dietrich F.S."/>
            <person name="Fisk D.G."/>
            <person name="Binkley G."/>
            <person name="Balakrishnan R."/>
            <person name="Costanzo M.C."/>
            <person name="Dwight S.S."/>
            <person name="Hitz B.C."/>
            <person name="Karra K."/>
            <person name="Nash R.S."/>
            <person name="Weng S."/>
            <person name="Wong E.D."/>
            <person name="Lloyd P."/>
            <person name="Skrzypek M.S."/>
            <person name="Miyasato S.R."/>
            <person name="Simison M."/>
            <person name="Cherry J.M."/>
        </authorList>
    </citation>
    <scope>GENOME REANNOTATION</scope>
    <source>
        <strain>ATCC 204508 / S288c</strain>
    </source>
</reference>
<reference key="4">
    <citation type="journal article" date="1995" name="Yeast">
        <title>A 43.5 kb segment of yeast chromosome XIV, which contains MFA2, MEP2, CAP/SRV2, NAM9, FKB1/FPR1/RBP1, MOM22 and CPT1, predicts an adenosine deaminase gene and 14 new open reading frames.</title>
        <authorList>
            <person name="Mallet L."/>
            <person name="Bussereau F."/>
            <person name="Jacquet M."/>
        </authorList>
    </citation>
    <scope>NUCLEOTIDE SEQUENCE [GENOMIC DNA] OF 1-50</scope>
    <source>
        <strain>ATCC 204508 / S288c</strain>
    </source>
</reference>
<reference key="5">
    <citation type="journal article" date="2008" name="Genetics">
        <title>Sequential elimination of major-effect contributors identifies additional quantitative trait loci conditioning high-temperature growth in yeast.</title>
        <authorList>
            <person name="Sinha H."/>
            <person name="David L."/>
            <person name="Pascon R.C."/>
            <person name="Clauder-Muenster S."/>
            <person name="Krishnakumar S."/>
            <person name="Nguyen M."/>
            <person name="Shi G."/>
            <person name="Dean J."/>
            <person name="Davis R.W."/>
            <person name="Oefner P.J."/>
            <person name="McCusker J.H."/>
            <person name="Steinmetz L.M."/>
        </authorList>
    </citation>
    <scope>NUCLEOTIDE SEQUENCE [GENOMIC DNA] OF 371-492</scope>
    <scope>VARIANTS ALA-378; ILE-423; SER-424; ALA-426 AND ASN-480</scope>
    <source>
        <strain>ATCC 200060 / W303</strain>
        <strain>S103</strain>
        <strain>SK1</strain>
        <strain>V1-09</strain>
        <strain>YJM 1129</strain>
        <strain>YJM 269</strain>
        <strain>YJM 270</strain>
        <strain>YJM 320</strain>
        <strain>YJM 326</strain>
        <strain>YJM 339</strain>
        <strain>YJM 627</strain>
        <strain>YJM230</strain>
    </source>
</reference>
<reference key="6">
    <citation type="journal article" date="2002" name="J. Biol. Chem.">
        <title>The Shq1p.Naf1p complex is required for box H/ACA small nucleolar ribonucleoprotein particle biogenesis.</title>
        <authorList>
            <person name="Yang P.K."/>
            <person name="Rotondo G."/>
            <person name="Porras T."/>
            <person name="Legrain P."/>
            <person name="Chanfreau G."/>
        </authorList>
    </citation>
    <scope>FUNCTION</scope>
    <scope>SUBCELLULAR LOCATION</scope>
    <scope>INTERACTION WITH CBF5; SHQ1 AND NHP2</scope>
</reference>
<reference key="7">
    <citation type="journal article" date="2002" name="Mol. Cell. Biol.">
        <title>Naf1p, an essential nucleoplasmic factor specifically required for accumulation of box H/ACA small nucleolar RNPs.</title>
        <authorList>
            <person name="Dez C."/>
            <person name="Noaillac-Depeyre J."/>
            <person name="Caizergues-Ferrer M."/>
            <person name="Henry Y."/>
        </authorList>
    </citation>
    <scope>FUNCTION</scope>
    <scope>SUBCELLULAR LOCATION</scope>
</reference>
<reference key="8">
    <citation type="journal article" date="2002" name="RNA">
        <title>Naf1 p is a box H/ACA snoRNP assembly factor.</title>
        <authorList>
            <person name="Fatica A."/>
            <person name="Dlakic M."/>
            <person name="Tollervey D."/>
        </authorList>
    </citation>
    <scope>FUNCTION</scope>
    <scope>RNA-BINDING</scope>
    <scope>SUBCELLULAR LOCATION</scope>
    <scope>INTERACTION WITH CBF5; NHP2 AND RPB1</scope>
</reference>
<reference key="9">
    <citation type="journal article" date="2003" name="Mol. Cell">
        <title>Assigning function to yeast proteins by integration of technologies.</title>
        <authorList>
            <person name="Hazbun T.R."/>
            <person name="Malmstroem L."/>
            <person name="Anderson S."/>
            <person name="Graczyk B.J."/>
            <person name="Fox B."/>
            <person name="Riffle M."/>
            <person name="Sundin B.A."/>
            <person name="Aranda J.D."/>
            <person name="McDonald W.H."/>
            <person name="Chiu C.-H."/>
            <person name="Snydsman B.E."/>
            <person name="Bradley P."/>
            <person name="Muller E.G.D."/>
            <person name="Fields S."/>
            <person name="Baker D."/>
            <person name="Yates J.R. III"/>
            <person name="Davis T.N."/>
        </authorList>
    </citation>
    <scope>IDENTIFICATION BY MASS SPECTROMETRY</scope>
</reference>
<reference key="10">
    <citation type="journal article" date="2003" name="Nature">
        <title>Global analysis of protein localization in budding yeast.</title>
        <authorList>
            <person name="Huh W.-K."/>
            <person name="Falvo J.V."/>
            <person name="Gerke L.C."/>
            <person name="Carroll A.S."/>
            <person name="Howson R.W."/>
            <person name="Weissman J.S."/>
            <person name="O'Shea E.K."/>
        </authorList>
    </citation>
    <scope>SUBCELLULAR LOCATION [LARGE SCALE ANALYSIS]</scope>
</reference>
<reference key="11">
    <citation type="journal article" date="2003" name="Nature">
        <title>Global analysis of protein expression in yeast.</title>
        <authorList>
            <person name="Ghaemmaghami S."/>
            <person name="Huh W.-K."/>
            <person name="Bower K."/>
            <person name="Howson R.W."/>
            <person name="Belle A."/>
            <person name="Dephoure N."/>
            <person name="O'Shea E.K."/>
            <person name="Weissman J.S."/>
        </authorList>
    </citation>
    <scope>LEVEL OF PROTEIN EXPRESSION [LARGE SCALE ANALYSIS]</scope>
</reference>
<reference key="12">
    <citation type="journal article" date="2005" name="Mol. Cell. Biol.">
        <title>Cotranscriptional recruitment of the pseudouridylsynthetase Cbf5p and of the RNA binding protein Naf1p during H/ACA snoRNP assembly.</title>
        <authorList>
            <person name="Yang P.K."/>
            <person name="Hoareau C."/>
            <person name="Froment C."/>
            <person name="Monsarrat B."/>
            <person name="Henry Y."/>
            <person name="Chanfreau G."/>
        </authorList>
    </citation>
    <scope>FUNCTION</scope>
    <scope>INTERACTION WITH CBF5</scope>
</reference>
<reference key="13">
    <citation type="journal article" date="2005" name="Mol. Cell. Biol.">
        <title>The cotranscriptional assembly of snoRNPs controls the biosynthesis of H/ACA snoRNAs in Saccharomyces cerevisiae.</title>
        <authorList>
            <person name="Ballarino M."/>
            <person name="Morlando M."/>
            <person name="Pagano F."/>
            <person name="Fatica A."/>
            <person name="Bozzoni I."/>
        </authorList>
    </citation>
    <scope>FUNCTION</scope>
    <scope>INTERACTION WITH CBF5 AND NHP2</scope>
</reference>
<reference key="14">
    <citation type="journal article" date="2007" name="J. Proteome Res.">
        <title>Large-scale phosphorylation analysis of alpha-factor-arrested Saccharomyces cerevisiae.</title>
        <authorList>
            <person name="Li X."/>
            <person name="Gerber S.A."/>
            <person name="Rudner A.D."/>
            <person name="Beausoleil S.A."/>
            <person name="Haas W."/>
            <person name="Villen J."/>
            <person name="Elias J.E."/>
            <person name="Gygi S.P."/>
        </authorList>
    </citation>
    <scope>PHOSPHORYLATION [LARGE SCALE ANALYSIS] AT SER-255</scope>
    <scope>IDENTIFICATION BY MASS SPECTROMETRY [LARGE SCALE ANALYSIS]</scope>
    <source>
        <strain>ADR376</strain>
    </source>
</reference>
<reference key="15">
    <citation type="journal article" date="2008" name="Mol. Cell. Proteomics">
        <title>A multidimensional chromatography technology for in-depth phosphoproteome analysis.</title>
        <authorList>
            <person name="Albuquerque C.P."/>
            <person name="Smolka M.B."/>
            <person name="Payne S.H."/>
            <person name="Bafna V."/>
            <person name="Eng J."/>
            <person name="Zhou H."/>
        </authorList>
    </citation>
    <scope>PHOSPHORYLATION [LARGE SCALE ANALYSIS] AT SER-255</scope>
    <scope>IDENTIFICATION BY MASS SPECTROMETRY [LARGE SCALE ANALYSIS]</scope>
</reference>
<reference key="16">
    <citation type="journal article" date="2009" name="Science">
        <title>Global analysis of Cdk1 substrate phosphorylation sites provides insights into evolution.</title>
        <authorList>
            <person name="Holt L.J."/>
            <person name="Tuch B.B."/>
            <person name="Villen J."/>
            <person name="Johnson A.D."/>
            <person name="Gygi S.P."/>
            <person name="Morgan D.O."/>
        </authorList>
    </citation>
    <scope>PHOSPHORYLATION [LARGE SCALE ANALYSIS] AT SER-255</scope>
    <scope>IDENTIFICATION BY MASS SPECTROMETRY [LARGE SCALE ANALYSIS]</scope>
</reference>
<reference key="17">
    <citation type="journal article" date="2007" name="J. Mol. Biol.">
        <title>The box H/ACA RNP assembly factor Naf1p contains a domain homologous to Gar1p mediating its interaction with Cbf5p.</title>
        <authorList>
            <person name="Leulliot N."/>
            <person name="Godin K.S."/>
            <person name="Hoareau-Aveilla C."/>
            <person name="Quevillon-Cheruel S."/>
            <person name="Varani G."/>
            <person name="Henry Y."/>
            <person name="Van Tilbeurgh H."/>
        </authorList>
    </citation>
    <scope>X-RAY CRYSTALLOGRAPHY (2.74 ANGSTROMS) OF 109-234</scope>
    <scope>DOMAIN</scope>
</reference>
<accession>P53919</accession>
<accession>B0KZR2</accession>
<accession>B0KZS1</accession>
<accession>B0KZT9</accession>
<accession>B0KZZ3</accession>
<accession>B0L002</accession>
<accession>D6W159</accession>
<keyword id="KW-0002">3D-structure</keyword>
<keyword id="KW-0539">Nucleus</keyword>
<keyword id="KW-0597">Phosphoprotein</keyword>
<keyword id="KW-1185">Reference proteome</keyword>
<keyword id="KW-0687">Ribonucleoprotein</keyword>
<keyword id="KW-0690">Ribosome biogenesis</keyword>
<keyword id="KW-0694">RNA-binding</keyword>
<keyword id="KW-0698">rRNA processing</keyword>